<name>NRAM_I77AH</name>
<organismHost>
    <name type="scientific">Aves</name>
    <dbReference type="NCBI Taxonomy" id="8782"/>
</organismHost>
<organismHost>
    <name type="scientific">Cetacea</name>
    <name type="common">whales</name>
    <dbReference type="NCBI Taxonomy" id="9721"/>
</organismHost>
<organismHost>
    <name type="scientific">Homo sapiens</name>
    <name type="common">Human</name>
    <dbReference type="NCBI Taxonomy" id="9606"/>
</organismHost>
<organismHost>
    <name type="scientific">Phocidae</name>
    <name type="common">true seals</name>
    <dbReference type="NCBI Taxonomy" id="9709"/>
</organismHost>
<organismHost>
    <name type="scientific">Sus scrofa</name>
    <name type="common">Pig</name>
    <dbReference type="NCBI Taxonomy" id="9823"/>
</organismHost>
<keyword id="KW-0106">Calcium</keyword>
<keyword id="KW-1015">Disulfide bond</keyword>
<keyword id="KW-0325">Glycoprotein</keyword>
<keyword id="KW-0326">Glycosidase</keyword>
<keyword id="KW-1032">Host cell membrane</keyword>
<keyword id="KW-1043">Host membrane</keyword>
<keyword id="KW-0378">Hydrolase</keyword>
<keyword id="KW-0472">Membrane</keyword>
<keyword id="KW-0479">Metal-binding</keyword>
<keyword id="KW-0735">Signal-anchor</keyword>
<keyword id="KW-0812">Transmembrane</keyword>
<keyword id="KW-1133">Transmembrane helix</keyword>
<keyword id="KW-0946">Virion</keyword>
<accession>Q75VQ0</accession>
<dbReference type="EC" id="3.2.1.18" evidence="1"/>
<dbReference type="EMBL" id="AB124662">
    <property type="protein sequence ID" value="BAD16646.1"/>
    <property type="molecule type" value="Genomic_RNA"/>
</dbReference>
<dbReference type="SMR" id="Q75VQ0"/>
<dbReference type="CAZy" id="GH34">
    <property type="family name" value="Glycoside Hydrolase Family 34"/>
</dbReference>
<dbReference type="GlyCosmos" id="Q75VQ0">
    <property type="glycosylation" value="7 sites, No reported glycans"/>
</dbReference>
<dbReference type="GO" id="GO:0020002">
    <property type="term" value="C:host cell plasma membrane"/>
    <property type="evidence" value="ECO:0007669"/>
    <property type="project" value="UniProtKB-SubCell"/>
</dbReference>
<dbReference type="GO" id="GO:0016020">
    <property type="term" value="C:membrane"/>
    <property type="evidence" value="ECO:0007669"/>
    <property type="project" value="UniProtKB-UniRule"/>
</dbReference>
<dbReference type="GO" id="GO:0055036">
    <property type="term" value="C:virion membrane"/>
    <property type="evidence" value="ECO:0007669"/>
    <property type="project" value="UniProtKB-SubCell"/>
</dbReference>
<dbReference type="GO" id="GO:0004308">
    <property type="term" value="F:exo-alpha-sialidase activity"/>
    <property type="evidence" value="ECO:0007669"/>
    <property type="project" value="UniProtKB-UniRule"/>
</dbReference>
<dbReference type="GO" id="GO:0046872">
    <property type="term" value="F:metal ion binding"/>
    <property type="evidence" value="ECO:0007669"/>
    <property type="project" value="UniProtKB-UniRule"/>
</dbReference>
<dbReference type="GO" id="GO:0005975">
    <property type="term" value="P:carbohydrate metabolic process"/>
    <property type="evidence" value="ECO:0007669"/>
    <property type="project" value="InterPro"/>
</dbReference>
<dbReference type="GO" id="GO:0046761">
    <property type="term" value="P:viral budding from plasma membrane"/>
    <property type="evidence" value="ECO:0007669"/>
    <property type="project" value="UniProtKB-UniRule"/>
</dbReference>
<dbReference type="CDD" id="cd15483">
    <property type="entry name" value="Influenza_NA"/>
    <property type="match status" value="1"/>
</dbReference>
<dbReference type="Gene3D" id="2.120.10.10">
    <property type="match status" value="1"/>
</dbReference>
<dbReference type="HAMAP" id="MF_04071">
    <property type="entry name" value="INFV_NRAM"/>
    <property type="match status" value="1"/>
</dbReference>
<dbReference type="InterPro" id="IPR001860">
    <property type="entry name" value="Glyco_hydro_34"/>
</dbReference>
<dbReference type="InterPro" id="IPR033654">
    <property type="entry name" value="Sialidase_Influenza_A/B"/>
</dbReference>
<dbReference type="InterPro" id="IPR036278">
    <property type="entry name" value="Sialidase_sf"/>
</dbReference>
<dbReference type="Pfam" id="PF00064">
    <property type="entry name" value="Neur"/>
    <property type="match status" value="1"/>
</dbReference>
<dbReference type="SUPFAM" id="SSF50939">
    <property type="entry name" value="Sialidases"/>
    <property type="match status" value="1"/>
</dbReference>
<protein>
    <recommendedName>
        <fullName evidence="1">Neuraminidase</fullName>
        <ecNumber evidence="1">3.2.1.18</ecNumber>
    </recommendedName>
</protein>
<sequence length="469" mass="52175">MNPNQKIITIGSVSLTIATICFLMQIAILVTTVTLHFKQYECDSPANNQVMPCEPIIIERNITEIVYLTNTTIEKEICPKLVEYRNWSKPQCKITGFAPFSKDNSIRLSAGGDIWVTREPYVSCDPGKCYQFALGQGTTLDNKHSNDTIHDRTPHRTLLMNELGVPFHLGTRQVCIAWSSSSCHDGKAWLHVCVTGYDKNATASFIYDGRLVDSIGSWSKNILRTQESECVCINGTCTVVMTDGSASERADTKILFIEEGKIVHISPLSGSAQHVEECSCYPRYPGVRCVCRDNWKGSNRPIVDINVKDYSIASSYVCSGLVGDTPRKNDRSSSSYCRNPNNEKGNHGVKGWAFDDGNDVWMGRTISEESRSGYETFKVIGGWSTPNSKLQINRQVIVDSDNRSGYSGIFSVEGKSCINRCFYVELIRGREQETRVWWTSNSIVVFCGTSGTYGTGSWPDGADINLMPI</sequence>
<gene>
    <name evidence="1" type="primary">NA</name>
</gene>
<proteinExistence type="inferred from homology"/>
<evidence type="ECO:0000255" key="1">
    <source>
        <dbReference type="HAMAP-Rule" id="MF_04071"/>
    </source>
</evidence>
<comment type="function">
    <text evidence="1">Catalyzes the removal of terminal sialic acid residues from viral and cellular glycoconjugates. Cleaves off the terminal sialic acids on the glycosylated HA during virus budding to facilitate virus release. Additionally helps virus spread through the circulation by further removing sialic acids from the cell surface. These cleavages prevent self-aggregation and ensure the efficient spread of the progeny virus from cell to cell. Otherwise, infection would be limited to one round of replication. Described as a receptor-destroying enzyme because it cleaves a terminal sialic acid from the cellular receptors. May facilitate viral invasion of the upper airways by cleaving the sialic acid moieties on the mucin of the airway epithelial cells. Likely to plays a role in the budding process through its association with lipid rafts during intracellular transport. May additionally display a raft-association independent effect on budding. Plays a role in the determination of host range restriction on replication and virulence. Sialidase activity in late endosome/lysosome traffic seems to enhance virus replication.</text>
</comment>
<comment type="catalytic activity">
    <reaction evidence="1">
        <text>Hydrolysis of alpha-(2-&gt;3)-, alpha-(2-&gt;6)-, alpha-(2-&gt;8)- glycosidic linkages of terminal sialic acid residues in oligosaccharides, glycoproteins, glycolipids, colominic acid and synthetic substrates.</text>
        <dbReference type="EC" id="3.2.1.18"/>
    </reaction>
</comment>
<comment type="cofactor">
    <cofactor evidence="1">
        <name>Ca(2+)</name>
        <dbReference type="ChEBI" id="CHEBI:29108"/>
    </cofactor>
</comment>
<comment type="activity regulation">
    <text evidence="1">Inhibited by the neuraminidase inhibitors zanamivir (Relenza) and oseltamivir (Tamiflu). These drugs interfere with the release of progeny virus from infected cells and are effective against all influenza strains. Resistance to neuraminidase inhibitors is quite rare.</text>
</comment>
<comment type="subunit">
    <text evidence="1">Homotetramer.</text>
</comment>
<comment type="subcellular location">
    <subcellularLocation>
        <location evidence="1">Virion membrane</location>
    </subcellularLocation>
    <subcellularLocation>
        <location evidence="1">Host apical cell membrane</location>
        <topology evidence="1">Single-pass type II membrane protein</topology>
    </subcellularLocation>
    <text evidence="1">Preferentially accumulates at the apical plasma membrane in infected polarized epithelial cells, which is the virus assembly site. Uses lipid rafts for cell surface transport and apical sorting. In the virion, forms a mushroom-shaped spike on the surface of the membrane.</text>
</comment>
<comment type="domain">
    <text evidence="1">Intact N-terminus is essential for virion morphogenesis. Possesses two apical sorting signals, one in the ectodomain, which is likely to be a glycan, and the other in the transmembrane domain. The transmembrane domain also plays a role in lipid raft association.</text>
</comment>
<comment type="PTM">
    <text evidence="1">N-glycosylated.</text>
</comment>
<comment type="miscellaneous">
    <text>The influenza A genome consist of 8 RNA segments. Genetic variation of hemagglutinin and/or neuraminidase genes results in the emergence of new influenza strains. The mechanism of variation can be the result of point mutations or the result of genetic reassortment between segments of two different strains.</text>
</comment>
<comment type="similarity">
    <text evidence="1">Belongs to the glycosyl hydrolase 34 family.</text>
</comment>
<feature type="chain" id="PRO_0000280156" description="Neuraminidase">
    <location>
        <begin position="1"/>
        <end position="469"/>
    </location>
</feature>
<feature type="topological domain" description="Intravirion" evidence="1">
    <location>
        <begin position="1"/>
        <end position="9"/>
    </location>
</feature>
<feature type="transmembrane region" description="Helical" evidence="1">
    <location>
        <begin position="10"/>
        <end position="30"/>
    </location>
</feature>
<feature type="topological domain" description="Virion surface" evidence="1">
    <location>
        <begin position="31"/>
        <end position="469"/>
    </location>
</feature>
<feature type="region of interest" description="Involved in apical transport and lipid raft association" evidence="1">
    <location>
        <begin position="11"/>
        <end position="33"/>
    </location>
</feature>
<feature type="region of interest" description="Hypervariable stalk region" evidence="1">
    <location>
        <begin position="36"/>
        <end position="88"/>
    </location>
</feature>
<feature type="region of interest" description="Head of neuraminidase" evidence="1">
    <location>
        <begin position="91"/>
        <end position="469"/>
    </location>
</feature>
<feature type="active site" description="Proton donor/acceptor" evidence="1">
    <location>
        <position position="151"/>
    </location>
</feature>
<feature type="active site" description="Nucleophile" evidence="1">
    <location>
        <position position="406"/>
    </location>
</feature>
<feature type="binding site" evidence="1">
    <location>
        <position position="118"/>
    </location>
    <ligand>
        <name>substrate</name>
    </ligand>
</feature>
<feature type="binding site" evidence="1">
    <location>
        <position position="152"/>
    </location>
    <ligand>
        <name>substrate</name>
    </ligand>
</feature>
<feature type="binding site" evidence="1">
    <location>
        <begin position="276"/>
        <end position="277"/>
    </location>
    <ligand>
        <name>substrate</name>
    </ligand>
</feature>
<feature type="binding site" evidence="1">
    <location>
        <position position="292"/>
    </location>
    <ligand>
        <name>substrate</name>
    </ligand>
</feature>
<feature type="binding site" evidence="1">
    <location>
        <position position="293"/>
    </location>
    <ligand>
        <name>Ca(2+)</name>
        <dbReference type="ChEBI" id="CHEBI:29108"/>
    </ligand>
</feature>
<feature type="binding site" evidence="1">
    <location>
        <position position="297"/>
    </location>
    <ligand>
        <name>Ca(2+)</name>
        <dbReference type="ChEBI" id="CHEBI:29108"/>
    </ligand>
</feature>
<feature type="binding site" evidence="1">
    <location>
        <position position="324"/>
    </location>
    <ligand>
        <name>Ca(2+)</name>
        <dbReference type="ChEBI" id="CHEBI:29108"/>
    </ligand>
</feature>
<feature type="binding site" evidence="1">
    <location>
        <position position="371"/>
    </location>
    <ligand>
        <name>substrate</name>
    </ligand>
</feature>
<feature type="glycosylation site" description="N-linked (GlcNAc...) asparagine; by host" evidence="1">
    <location>
        <position position="61"/>
    </location>
</feature>
<feature type="glycosylation site" description="N-linked (GlcNAc...) asparagine; by host" evidence="1">
    <location>
        <position position="70"/>
    </location>
</feature>
<feature type="glycosylation site" description="N-linked (GlcNAc...) asparagine; by host" evidence="1">
    <location>
        <position position="86"/>
    </location>
</feature>
<feature type="glycosylation site" description="N-linked (GlcNAc...) asparagine; by host" evidence="1">
    <location>
        <position position="146"/>
    </location>
</feature>
<feature type="glycosylation site" description="N-linked (GlcNAc...) asparagine; by host" evidence="1">
    <location>
        <position position="200"/>
    </location>
</feature>
<feature type="glycosylation site" description="N-linked (GlcNAc...) asparagine; by host" evidence="1">
    <location>
        <position position="234"/>
    </location>
</feature>
<feature type="glycosylation site" description="N-linked (GlcNAc...) asparagine; by host" evidence="1">
    <location>
        <position position="402"/>
    </location>
</feature>
<feature type="disulfide bond" evidence="1">
    <location>
        <begin position="92"/>
        <end position="417"/>
    </location>
</feature>
<feature type="disulfide bond" evidence="1">
    <location>
        <begin position="124"/>
        <end position="129"/>
    </location>
</feature>
<feature type="disulfide bond" evidence="1">
    <location>
        <begin position="183"/>
        <end position="230"/>
    </location>
</feature>
<feature type="disulfide bond" evidence="1">
    <location>
        <begin position="232"/>
        <end position="237"/>
    </location>
</feature>
<feature type="disulfide bond" evidence="1">
    <location>
        <begin position="278"/>
        <end position="291"/>
    </location>
</feature>
<feature type="disulfide bond" evidence="1">
    <location>
        <begin position="280"/>
        <end position="289"/>
    </location>
</feature>
<feature type="disulfide bond" evidence="1">
    <location>
        <begin position="318"/>
        <end position="337"/>
    </location>
</feature>
<feature type="disulfide bond" evidence="1">
    <location>
        <begin position="421"/>
        <end position="447"/>
    </location>
</feature>
<organism>
    <name type="scientific">Influenza A virus (strain A/Texas/1/1977 H3N2)</name>
    <dbReference type="NCBI Taxonomy" id="444318"/>
    <lineage>
        <taxon>Viruses</taxon>
        <taxon>Riboviria</taxon>
        <taxon>Orthornavirae</taxon>
        <taxon>Negarnaviricota</taxon>
        <taxon>Polyploviricotina</taxon>
        <taxon>Insthoviricetes</taxon>
        <taxon>Articulavirales</taxon>
        <taxon>Orthomyxoviridae</taxon>
        <taxon>Alphainfluenzavirus</taxon>
        <taxon>Alphainfluenzavirus influenzae</taxon>
        <taxon>Influenza A virus</taxon>
    </lineage>
</organism>
<reference key="1">
    <citation type="journal article" date="2004" name="FEBS Lett.">
        <title>Evolutional analysis of human influenza A virus N2 neuraminidase genes based on the transition of the low-pH stability of sialidase activity.</title>
        <authorList>
            <person name="Suzuki T."/>
            <person name="Takahashi T."/>
            <person name="Saito T."/>
            <person name="Guo C.T."/>
            <person name="Hidari K.I.-P.J."/>
            <person name="Miyamoto D."/>
            <person name="Suzuki Y."/>
        </authorList>
    </citation>
    <scope>NUCLEOTIDE SEQUENCE [GENOMIC RNA]</scope>
</reference>
<reference key="2">
    <citation type="journal article" date="2004" name="Virus Res.">
        <title>Assembly and budding of influenza virus.</title>
        <authorList>
            <person name="Nayak D.P."/>
            <person name="Hui E.K."/>
            <person name="Barman S."/>
        </authorList>
    </citation>
    <scope>REVIEW</scope>
</reference>
<reference key="3">
    <citation type="journal article" date="2005" name="N. Engl. J. Med.">
        <title>Neuraminidase inhibitors for influenza.</title>
        <authorList>
            <person name="Moscona A."/>
        </authorList>
    </citation>
    <scope>REVIEW</scope>
</reference>
<reference key="4">
    <citation type="journal article" date="2005" name="Biol. Pharm. Bull.">
        <title>Sialobiology of influenza: molecular mechanism of host range variation of influenza viruses.</title>
        <authorList>
            <person name="Suzuki Y."/>
        </authorList>
    </citation>
    <scope>REVIEW</scope>
</reference>